<protein>
    <recommendedName>
        <fullName evidence="1">Gamma-glutamyl phosphate reductase</fullName>
        <shortName evidence="1">GPR</shortName>
        <ecNumber evidence="1">1.2.1.41</ecNumber>
    </recommendedName>
    <alternativeName>
        <fullName evidence="1">Glutamate-5-semialdehyde dehydrogenase</fullName>
    </alternativeName>
    <alternativeName>
        <fullName evidence="1">Glutamyl-gamma-semialdehyde dehydrogenase</fullName>
        <shortName evidence="1">GSA dehydrogenase</shortName>
    </alternativeName>
</protein>
<reference key="1">
    <citation type="submission" date="2007-04" db="EMBL/GenBank/DDBJ databases">
        <title>Genome sequence of the thermophilic hydrogen-producing bacterium Caldicellulosiruptor saccharolyticus DSM 8903.</title>
        <authorList>
            <person name="Copeland A."/>
            <person name="Lucas S."/>
            <person name="Lapidus A."/>
            <person name="Barry K."/>
            <person name="Detter J.C."/>
            <person name="Glavina del Rio T."/>
            <person name="Hammon N."/>
            <person name="Israni S."/>
            <person name="Dalin E."/>
            <person name="Tice H."/>
            <person name="Pitluck S."/>
            <person name="Kiss H."/>
            <person name="Brettin T."/>
            <person name="Bruce D."/>
            <person name="Han C."/>
            <person name="Schmutz J."/>
            <person name="Larimer F."/>
            <person name="Land M."/>
            <person name="Hauser L."/>
            <person name="Kyrpides N."/>
            <person name="Lykidis A."/>
            <person name="van de Werken H.J.G."/>
            <person name="Verhaart M.R.A."/>
            <person name="VanFossen A.L."/>
            <person name="Lewis D.L."/>
            <person name="Nichols J.D."/>
            <person name="Goorissen H.P."/>
            <person name="van Niel E.W.J."/>
            <person name="Stams F.J.M."/>
            <person name="Willquist K.U."/>
            <person name="Ward D.E."/>
            <person name="van der Oost J."/>
            <person name="Kelly R.M."/>
            <person name="Kengen S.M.W."/>
            <person name="Richardson P."/>
        </authorList>
    </citation>
    <scope>NUCLEOTIDE SEQUENCE [LARGE SCALE GENOMIC DNA]</scope>
    <source>
        <strain>ATCC 43494 / DSM 8903 / Tp8T 6331</strain>
    </source>
</reference>
<dbReference type="EC" id="1.2.1.41" evidence="1"/>
<dbReference type="EMBL" id="CP000679">
    <property type="protein sequence ID" value="ABP67295.1"/>
    <property type="molecule type" value="Genomic_DNA"/>
</dbReference>
<dbReference type="RefSeq" id="WP_011917229.1">
    <property type="nucleotide sequence ID" value="NC_009437.1"/>
</dbReference>
<dbReference type="SMR" id="A4XK60"/>
<dbReference type="STRING" id="351627.Csac_1708"/>
<dbReference type="KEGG" id="csc:Csac_1708"/>
<dbReference type="eggNOG" id="COG0014">
    <property type="taxonomic scope" value="Bacteria"/>
</dbReference>
<dbReference type="HOGENOM" id="CLU_030231_0_0_9"/>
<dbReference type="OrthoDB" id="9809970at2"/>
<dbReference type="UniPathway" id="UPA00098">
    <property type="reaction ID" value="UER00360"/>
</dbReference>
<dbReference type="Proteomes" id="UP000000256">
    <property type="component" value="Chromosome"/>
</dbReference>
<dbReference type="GO" id="GO:0005737">
    <property type="term" value="C:cytoplasm"/>
    <property type="evidence" value="ECO:0007669"/>
    <property type="project" value="UniProtKB-SubCell"/>
</dbReference>
<dbReference type="GO" id="GO:0004350">
    <property type="term" value="F:glutamate-5-semialdehyde dehydrogenase activity"/>
    <property type="evidence" value="ECO:0007669"/>
    <property type="project" value="UniProtKB-UniRule"/>
</dbReference>
<dbReference type="GO" id="GO:0050661">
    <property type="term" value="F:NADP binding"/>
    <property type="evidence" value="ECO:0007669"/>
    <property type="project" value="InterPro"/>
</dbReference>
<dbReference type="GO" id="GO:0055129">
    <property type="term" value="P:L-proline biosynthetic process"/>
    <property type="evidence" value="ECO:0007669"/>
    <property type="project" value="UniProtKB-UniRule"/>
</dbReference>
<dbReference type="CDD" id="cd07079">
    <property type="entry name" value="ALDH_F18-19_ProA-GPR"/>
    <property type="match status" value="1"/>
</dbReference>
<dbReference type="FunFam" id="3.40.309.10:FF:000006">
    <property type="entry name" value="Gamma-glutamyl phosphate reductase"/>
    <property type="match status" value="1"/>
</dbReference>
<dbReference type="Gene3D" id="3.40.605.10">
    <property type="entry name" value="Aldehyde Dehydrogenase, Chain A, domain 1"/>
    <property type="match status" value="1"/>
</dbReference>
<dbReference type="Gene3D" id="3.40.309.10">
    <property type="entry name" value="Aldehyde Dehydrogenase, Chain A, domain 2"/>
    <property type="match status" value="1"/>
</dbReference>
<dbReference type="HAMAP" id="MF_00412">
    <property type="entry name" value="ProA"/>
    <property type="match status" value="1"/>
</dbReference>
<dbReference type="InterPro" id="IPR016161">
    <property type="entry name" value="Ald_DH/histidinol_DH"/>
</dbReference>
<dbReference type="InterPro" id="IPR016163">
    <property type="entry name" value="Ald_DH_C"/>
</dbReference>
<dbReference type="InterPro" id="IPR016162">
    <property type="entry name" value="Ald_DH_N"/>
</dbReference>
<dbReference type="InterPro" id="IPR015590">
    <property type="entry name" value="Aldehyde_DH_dom"/>
</dbReference>
<dbReference type="InterPro" id="IPR020593">
    <property type="entry name" value="G-glutamylP_reductase_CS"/>
</dbReference>
<dbReference type="InterPro" id="IPR012134">
    <property type="entry name" value="Glu-5-SA_DH"/>
</dbReference>
<dbReference type="InterPro" id="IPR000965">
    <property type="entry name" value="GPR_dom"/>
</dbReference>
<dbReference type="NCBIfam" id="NF001221">
    <property type="entry name" value="PRK00197.1"/>
    <property type="match status" value="1"/>
</dbReference>
<dbReference type="NCBIfam" id="TIGR00407">
    <property type="entry name" value="proA"/>
    <property type="match status" value="1"/>
</dbReference>
<dbReference type="PANTHER" id="PTHR11063:SF8">
    <property type="entry name" value="DELTA-1-PYRROLINE-5-CARBOXYLATE SYNTHASE"/>
    <property type="match status" value="1"/>
</dbReference>
<dbReference type="PANTHER" id="PTHR11063">
    <property type="entry name" value="GLUTAMATE SEMIALDEHYDE DEHYDROGENASE"/>
    <property type="match status" value="1"/>
</dbReference>
<dbReference type="Pfam" id="PF00171">
    <property type="entry name" value="Aldedh"/>
    <property type="match status" value="1"/>
</dbReference>
<dbReference type="PIRSF" id="PIRSF000151">
    <property type="entry name" value="GPR"/>
    <property type="match status" value="1"/>
</dbReference>
<dbReference type="SUPFAM" id="SSF53720">
    <property type="entry name" value="ALDH-like"/>
    <property type="match status" value="1"/>
</dbReference>
<dbReference type="PROSITE" id="PS01223">
    <property type="entry name" value="PROA"/>
    <property type="match status" value="1"/>
</dbReference>
<keyword id="KW-0028">Amino-acid biosynthesis</keyword>
<keyword id="KW-0963">Cytoplasm</keyword>
<keyword id="KW-0521">NADP</keyword>
<keyword id="KW-0560">Oxidoreductase</keyword>
<keyword id="KW-0641">Proline biosynthesis</keyword>
<gene>
    <name evidence="1" type="primary">proA</name>
    <name type="ordered locus">Csac_1708</name>
</gene>
<feature type="chain" id="PRO_1000049941" description="Gamma-glutamyl phosphate reductase">
    <location>
        <begin position="1"/>
        <end position="419"/>
    </location>
</feature>
<organism>
    <name type="scientific">Caldicellulosiruptor saccharolyticus (strain ATCC 43494 / DSM 8903 / Tp8T 6331)</name>
    <dbReference type="NCBI Taxonomy" id="351627"/>
    <lineage>
        <taxon>Bacteria</taxon>
        <taxon>Bacillati</taxon>
        <taxon>Bacillota</taxon>
        <taxon>Bacillota incertae sedis</taxon>
        <taxon>Caldicellulosiruptorales</taxon>
        <taxon>Caldicellulosiruptoraceae</taxon>
        <taxon>Caldicellulosiruptor</taxon>
    </lineage>
</organism>
<name>PROA_CALS8</name>
<accession>A4XK60</accession>
<evidence type="ECO:0000255" key="1">
    <source>
        <dbReference type="HAMAP-Rule" id="MF_00412"/>
    </source>
</evidence>
<sequence length="419" mass="46002">MSDLIQKAQKVKEASKKLMNLSESQKNLALSCISKKILDNMEYILVENKKDMENAQNKGIKGALLDRLKLTEDRIRQICKGIEDVIKLPDPVGEVISMWKRPNGLIIGQKRVPIGAIGIIYEARPNVTVDAAVLCLKAGNSVLLRGGSEAINSNVALVKTMKEGLIEAGIDEGSIEIVEDTSRETAVAMMKLNEYLDLLIPRGGANLIKTVVQNATVPVIETGVGNCHVFVDESADFEMAEKIVINAKTQRPGVCNAAEKLLVHKNIAESFLPMIVKKLMTKGVEIRGCSKTVEICKQNGIEVKEATEDDWYTEYLDLIIGVKVVDSIDAAIEHINKYGSKHSEAIVTRDYFNAQKFLDFVDAAACYVNASTRFTDGFEFGFGAEIGISTQKLHARGPMGLKELTTIKYIILGSGQVRE</sequence>
<comment type="function">
    <text evidence="1">Catalyzes the NADPH-dependent reduction of L-glutamate 5-phosphate into L-glutamate 5-semialdehyde and phosphate. The product spontaneously undergoes cyclization to form 1-pyrroline-5-carboxylate.</text>
</comment>
<comment type="catalytic activity">
    <reaction evidence="1">
        <text>L-glutamate 5-semialdehyde + phosphate + NADP(+) = L-glutamyl 5-phosphate + NADPH + H(+)</text>
        <dbReference type="Rhea" id="RHEA:19541"/>
        <dbReference type="ChEBI" id="CHEBI:15378"/>
        <dbReference type="ChEBI" id="CHEBI:43474"/>
        <dbReference type="ChEBI" id="CHEBI:57783"/>
        <dbReference type="ChEBI" id="CHEBI:58066"/>
        <dbReference type="ChEBI" id="CHEBI:58274"/>
        <dbReference type="ChEBI" id="CHEBI:58349"/>
        <dbReference type="EC" id="1.2.1.41"/>
    </reaction>
</comment>
<comment type="pathway">
    <text evidence="1">Amino-acid biosynthesis; L-proline biosynthesis; L-glutamate 5-semialdehyde from L-glutamate: step 2/2.</text>
</comment>
<comment type="subcellular location">
    <subcellularLocation>
        <location evidence="1">Cytoplasm</location>
    </subcellularLocation>
</comment>
<comment type="similarity">
    <text evidence="1">Belongs to the gamma-glutamyl phosphate reductase family.</text>
</comment>
<proteinExistence type="inferred from homology"/>